<reference key="1">
    <citation type="journal article" date="2006" name="J. Bacteriol.">
        <title>Comparative genomic evidence for a close relationship between the dimorphic prosthecate bacteria Hyphomonas neptunium and Caulobacter crescentus.</title>
        <authorList>
            <person name="Badger J.H."/>
            <person name="Hoover T.R."/>
            <person name="Brun Y.V."/>
            <person name="Weiner R.M."/>
            <person name="Laub M.T."/>
            <person name="Alexandre G."/>
            <person name="Mrazek J."/>
            <person name="Ren Q."/>
            <person name="Paulsen I.T."/>
            <person name="Nelson K.E."/>
            <person name="Khouri H.M."/>
            <person name="Radune D."/>
            <person name="Sosa J."/>
            <person name="Dodson R.J."/>
            <person name="Sullivan S.A."/>
            <person name="Rosovitz M.J."/>
            <person name="Madupu R."/>
            <person name="Brinkac L.M."/>
            <person name="Durkin A.S."/>
            <person name="Daugherty S.C."/>
            <person name="Kothari S.P."/>
            <person name="Giglio M.G."/>
            <person name="Zhou L."/>
            <person name="Haft D.H."/>
            <person name="Selengut J.D."/>
            <person name="Davidsen T.M."/>
            <person name="Yang Q."/>
            <person name="Zafar N."/>
            <person name="Ward N.L."/>
        </authorList>
    </citation>
    <scope>NUCLEOTIDE SEQUENCE [LARGE SCALE GENOMIC DNA]</scope>
    <source>
        <strain>ATCC 15444</strain>
    </source>
</reference>
<keyword id="KW-0963">Cytoplasm</keyword>
<keyword id="KW-0378">Hydrolase</keyword>
<keyword id="KW-0546">Nucleotide metabolism</keyword>
<keyword id="KW-1185">Reference proteome</keyword>
<accession>Q0C6A7</accession>
<proteinExistence type="inferred from homology"/>
<dbReference type="EC" id="3.6.1.9" evidence="1"/>
<dbReference type="EMBL" id="CP000158">
    <property type="protein sequence ID" value="ABI76902.1"/>
    <property type="molecule type" value="Genomic_DNA"/>
</dbReference>
<dbReference type="RefSeq" id="WP_011645036.1">
    <property type="nucleotide sequence ID" value="NC_008358.1"/>
</dbReference>
<dbReference type="SMR" id="Q0C6A7"/>
<dbReference type="STRING" id="228405.HNE_0002"/>
<dbReference type="KEGG" id="hne:HNE_0002"/>
<dbReference type="eggNOG" id="COG0424">
    <property type="taxonomic scope" value="Bacteria"/>
</dbReference>
<dbReference type="HOGENOM" id="CLU_040416_1_1_5"/>
<dbReference type="Proteomes" id="UP000001959">
    <property type="component" value="Chromosome"/>
</dbReference>
<dbReference type="GO" id="GO:0005737">
    <property type="term" value="C:cytoplasm"/>
    <property type="evidence" value="ECO:0007669"/>
    <property type="project" value="UniProtKB-SubCell"/>
</dbReference>
<dbReference type="GO" id="GO:0047429">
    <property type="term" value="F:nucleoside triphosphate diphosphatase activity"/>
    <property type="evidence" value="ECO:0007669"/>
    <property type="project" value="UniProtKB-EC"/>
</dbReference>
<dbReference type="GO" id="GO:0009117">
    <property type="term" value="P:nucleotide metabolic process"/>
    <property type="evidence" value="ECO:0007669"/>
    <property type="project" value="UniProtKB-KW"/>
</dbReference>
<dbReference type="CDD" id="cd00555">
    <property type="entry name" value="Maf"/>
    <property type="match status" value="1"/>
</dbReference>
<dbReference type="Gene3D" id="3.90.950.10">
    <property type="match status" value="1"/>
</dbReference>
<dbReference type="HAMAP" id="MF_00528">
    <property type="entry name" value="Maf"/>
    <property type="match status" value="1"/>
</dbReference>
<dbReference type="InterPro" id="IPR029001">
    <property type="entry name" value="ITPase-like_fam"/>
</dbReference>
<dbReference type="InterPro" id="IPR003697">
    <property type="entry name" value="Maf-like"/>
</dbReference>
<dbReference type="PANTHER" id="PTHR43213">
    <property type="entry name" value="BIFUNCTIONAL DTTP/UTP PYROPHOSPHATASE/METHYLTRANSFERASE PROTEIN-RELATED"/>
    <property type="match status" value="1"/>
</dbReference>
<dbReference type="PANTHER" id="PTHR43213:SF5">
    <property type="entry name" value="BIFUNCTIONAL DTTP_UTP PYROPHOSPHATASE_METHYLTRANSFERASE PROTEIN-RELATED"/>
    <property type="match status" value="1"/>
</dbReference>
<dbReference type="Pfam" id="PF02545">
    <property type="entry name" value="Maf"/>
    <property type="match status" value="1"/>
</dbReference>
<dbReference type="PIRSF" id="PIRSF006305">
    <property type="entry name" value="Maf"/>
    <property type="match status" value="1"/>
</dbReference>
<dbReference type="SUPFAM" id="SSF52972">
    <property type="entry name" value="ITPase-like"/>
    <property type="match status" value="1"/>
</dbReference>
<comment type="function">
    <text evidence="1">Nucleoside triphosphate pyrophosphatase. May have a dual role in cell division arrest and in preventing the incorporation of modified nucleotides into cellular nucleic acids.</text>
</comment>
<comment type="catalytic activity">
    <reaction evidence="1">
        <text>a ribonucleoside 5'-triphosphate + H2O = a ribonucleoside 5'-phosphate + diphosphate + H(+)</text>
        <dbReference type="Rhea" id="RHEA:23996"/>
        <dbReference type="ChEBI" id="CHEBI:15377"/>
        <dbReference type="ChEBI" id="CHEBI:15378"/>
        <dbReference type="ChEBI" id="CHEBI:33019"/>
        <dbReference type="ChEBI" id="CHEBI:58043"/>
        <dbReference type="ChEBI" id="CHEBI:61557"/>
        <dbReference type="EC" id="3.6.1.9"/>
    </reaction>
</comment>
<comment type="catalytic activity">
    <reaction evidence="1">
        <text>a 2'-deoxyribonucleoside 5'-triphosphate + H2O = a 2'-deoxyribonucleoside 5'-phosphate + diphosphate + H(+)</text>
        <dbReference type="Rhea" id="RHEA:44644"/>
        <dbReference type="ChEBI" id="CHEBI:15377"/>
        <dbReference type="ChEBI" id="CHEBI:15378"/>
        <dbReference type="ChEBI" id="CHEBI:33019"/>
        <dbReference type="ChEBI" id="CHEBI:61560"/>
        <dbReference type="ChEBI" id="CHEBI:65317"/>
        <dbReference type="EC" id="3.6.1.9"/>
    </reaction>
</comment>
<comment type="cofactor">
    <cofactor evidence="1">
        <name>a divalent metal cation</name>
        <dbReference type="ChEBI" id="CHEBI:60240"/>
    </cofactor>
</comment>
<comment type="subcellular location">
    <subcellularLocation>
        <location evidence="1">Cytoplasm</location>
    </subcellularLocation>
</comment>
<comment type="similarity">
    <text evidence="1">Belongs to the Maf family.</text>
</comment>
<evidence type="ECO:0000255" key="1">
    <source>
        <dbReference type="HAMAP-Rule" id="MF_00528"/>
    </source>
</evidence>
<feature type="chain" id="PRO_0000267321" description="Nucleoside triphosphate pyrophosphatase">
    <location>
        <begin position="1"/>
        <end position="198"/>
    </location>
</feature>
<feature type="active site" description="Proton acceptor" evidence="1">
    <location>
        <position position="75"/>
    </location>
</feature>
<organism>
    <name type="scientific">Hyphomonas neptunium (strain ATCC 15444)</name>
    <dbReference type="NCBI Taxonomy" id="228405"/>
    <lineage>
        <taxon>Bacteria</taxon>
        <taxon>Pseudomonadati</taxon>
        <taxon>Pseudomonadota</taxon>
        <taxon>Alphaproteobacteria</taxon>
        <taxon>Hyphomonadales</taxon>
        <taxon>Hyphomonadaceae</taxon>
        <taxon>Hyphomonas</taxon>
    </lineage>
</organism>
<protein>
    <recommendedName>
        <fullName evidence="1">Nucleoside triphosphate pyrophosphatase</fullName>
        <ecNumber evidence="1">3.6.1.9</ecNumber>
    </recommendedName>
    <alternativeName>
        <fullName evidence="1">Nucleotide pyrophosphatase</fullName>
        <shortName evidence="1">Nucleotide PPase</shortName>
    </alternativeName>
</protein>
<sequence length="198" mass="21515">MSLAVTLASTSKSRRALLAAAGVEADGVAPNVDEESFRNTMRANKLPVREQAMQLAELKAMRVSAKRPGLVIGGDQMLALGDEAFDKPADLEAAKNHLRQLSGKSHTLETAIVICEDGAPIWRHLARPKLTMRPLTEDFIETYVSSCGDALLSTVGAYQLEGPGAQLFTRIEGDYFSILGLPLLPLLDYLRIRKVLPT</sequence>
<gene>
    <name type="ordered locus">HNE_0002</name>
</gene>
<name>NTPP_HYPNA</name>